<feature type="chain" id="PRO_0000175823" description="Probable transcriptional regulatory protein IL1088">
    <location>
        <begin position="1"/>
        <end position="249"/>
    </location>
</feature>
<keyword id="KW-0963">Cytoplasm</keyword>
<keyword id="KW-0238">DNA-binding</keyword>
<keyword id="KW-1185">Reference proteome</keyword>
<keyword id="KW-0804">Transcription</keyword>
<keyword id="KW-0805">Transcription regulation</keyword>
<comment type="subcellular location">
    <subcellularLocation>
        <location evidence="1">Cytoplasm</location>
    </subcellularLocation>
</comment>
<comment type="similarity">
    <text evidence="1">Belongs to the TACO1 family.</text>
</comment>
<sequence>MAGHSKWSNIKHRKAAQDAKRGKIFTKLIREITVSAREGGGDPETNPRLRAAIDKALSNNMKRDTIDTAVKRGSGDLEGDNVDELTYEGYGPSGVAVLLECMTDNRNRTVSDVRHAFSKLGGNLGTDGSVAYLFNKKGVISYSDGVTEEQVMEPALEAGAEDILAYDEGSIDVITSPENFGAVKDALDAKGLEASNAEVTQVPDTRVDLDEESARTFLKLLDALEDLDDVQNVYHNADISDEIIARLDD</sequence>
<proteinExistence type="inferred from homology"/>
<evidence type="ECO:0000255" key="1">
    <source>
        <dbReference type="HAMAP-Rule" id="MF_00693"/>
    </source>
</evidence>
<organism>
    <name type="scientific">Idiomarina loihiensis (strain ATCC BAA-735 / DSM 15497 / L2-TR)</name>
    <dbReference type="NCBI Taxonomy" id="283942"/>
    <lineage>
        <taxon>Bacteria</taxon>
        <taxon>Pseudomonadati</taxon>
        <taxon>Pseudomonadota</taxon>
        <taxon>Gammaproteobacteria</taxon>
        <taxon>Alteromonadales</taxon>
        <taxon>Idiomarinaceae</taxon>
        <taxon>Idiomarina</taxon>
    </lineage>
</organism>
<dbReference type="EMBL" id="AE017340">
    <property type="protein sequence ID" value="AAV81928.1"/>
    <property type="molecule type" value="Genomic_DNA"/>
</dbReference>
<dbReference type="RefSeq" id="WP_011234339.1">
    <property type="nucleotide sequence ID" value="NC_006512.1"/>
</dbReference>
<dbReference type="SMR" id="Q5QYV3"/>
<dbReference type="STRING" id="283942.IL1088"/>
<dbReference type="GeneID" id="41336256"/>
<dbReference type="KEGG" id="ilo:IL1088"/>
<dbReference type="eggNOG" id="COG0217">
    <property type="taxonomic scope" value="Bacteria"/>
</dbReference>
<dbReference type="HOGENOM" id="CLU_062974_2_2_6"/>
<dbReference type="OrthoDB" id="9781053at2"/>
<dbReference type="Proteomes" id="UP000001171">
    <property type="component" value="Chromosome"/>
</dbReference>
<dbReference type="GO" id="GO:0005829">
    <property type="term" value="C:cytosol"/>
    <property type="evidence" value="ECO:0007669"/>
    <property type="project" value="TreeGrafter"/>
</dbReference>
<dbReference type="GO" id="GO:0003677">
    <property type="term" value="F:DNA binding"/>
    <property type="evidence" value="ECO:0007669"/>
    <property type="project" value="UniProtKB-UniRule"/>
</dbReference>
<dbReference type="GO" id="GO:0006355">
    <property type="term" value="P:regulation of DNA-templated transcription"/>
    <property type="evidence" value="ECO:0007669"/>
    <property type="project" value="UniProtKB-UniRule"/>
</dbReference>
<dbReference type="FunFam" id="1.10.10.200:FF:000001">
    <property type="entry name" value="Probable transcriptional regulatory protein YebC"/>
    <property type="match status" value="1"/>
</dbReference>
<dbReference type="FunFam" id="3.30.70.980:FF:000002">
    <property type="entry name" value="Probable transcriptional regulatory protein YebC"/>
    <property type="match status" value="1"/>
</dbReference>
<dbReference type="Gene3D" id="1.10.10.200">
    <property type="match status" value="1"/>
</dbReference>
<dbReference type="Gene3D" id="3.30.70.980">
    <property type="match status" value="2"/>
</dbReference>
<dbReference type="HAMAP" id="MF_00693">
    <property type="entry name" value="Transcrip_reg_TACO1"/>
    <property type="match status" value="1"/>
</dbReference>
<dbReference type="InterPro" id="IPR017856">
    <property type="entry name" value="Integrase-like_N"/>
</dbReference>
<dbReference type="InterPro" id="IPR048300">
    <property type="entry name" value="TACO1_YebC-like_2nd/3rd_dom"/>
</dbReference>
<dbReference type="InterPro" id="IPR049083">
    <property type="entry name" value="TACO1_YebC_N"/>
</dbReference>
<dbReference type="InterPro" id="IPR002876">
    <property type="entry name" value="Transcrip_reg_TACO1-like"/>
</dbReference>
<dbReference type="InterPro" id="IPR026564">
    <property type="entry name" value="Transcrip_reg_TACO1-like_dom3"/>
</dbReference>
<dbReference type="InterPro" id="IPR029072">
    <property type="entry name" value="YebC-like"/>
</dbReference>
<dbReference type="NCBIfam" id="NF001030">
    <property type="entry name" value="PRK00110.1"/>
    <property type="match status" value="1"/>
</dbReference>
<dbReference type="NCBIfam" id="NF009044">
    <property type="entry name" value="PRK12378.1"/>
    <property type="match status" value="1"/>
</dbReference>
<dbReference type="NCBIfam" id="TIGR01033">
    <property type="entry name" value="YebC/PmpR family DNA-binding transcriptional regulator"/>
    <property type="match status" value="1"/>
</dbReference>
<dbReference type="PANTHER" id="PTHR12532:SF6">
    <property type="entry name" value="TRANSCRIPTIONAL REGULATORY PROTEIN YEBC-RELATED"/>
    <property type="match status" value="1"/>
</dbReference>
<dbReference type="PANTHER" id="PTHR12532">
    <property type="entry name" value="TRANSLATIONAL ACTIVATOR OF CYTOCHROME C OXIDASE 1"/>
    <property type="match status" value="1"/>
</dbReference>
<dbReference type="Pfam" id="PF20772">
    <property type="entry name" value="TACO1_YebC_N"/>
    <property type="match status" value="1"/>
</dbReference>
<dbReference type="Pfam" id="PF01709">
    <property type="entry name" value="Transcrip_reg"/>
    <property type="match status" value="1"/>
</dbReference>
<dbReference type="SUPFAM" id="SSF75625">
    <property type="entry name" value="YebC-like"/>
    <property type="match status" value="1"/>
</dbReference>
<name>Y1088_IDILO</name>
<accession>Q5QYV3</accession>
<protein>
    <recommendedName>
        <fullName evidence="1">Probable transcriptional regulatory protein IL1088</fullName>
    </recommendedName>
</protein>
<reference key="1">
    <citation type="journal article" date="2004" name="Proc. Natl. Acad. Sci. U.S.A.">
        <title>Genome sequence of the deep-sea gamma-proteobacterium Idiomarina loihiensis reveals amino acid fermentation as a source of carbon and energy.</title>
        <authorList>
            <person name="Hou S."/>
            <person name="Saw J.H."/>
            <person name="Lee K.S."/>
            <person name="Freitas T.A."/>
            <person name="Belisle C."/>
            <person name="Kawarabayasi Y."/>
            <person name="Donachie S.P."/>
            <person name="Pikina A."/>
            <person name="Galperin M.Y."/>
            <person name="Koonin E.V."/>
            <person name="Makarova K.S."/>
            <person name="Omelchenko M.V."/>
            <person name="Sorokin A."/>
            <person name="Wolf Y.I."/>
            <person name="Li Q.X."/>
            <person name="Keum Y.S."/>
            <person name="Campbell S."/>
            <person name="Denery J."/>
            <person name="Aizawa S."/>
            <person name="Shibata S."/>
            <person name="Malahoff A."/>
            <person name="Alam M."/>
        </authorList>
    </citation>
    <scope>NUCLEOTIDE SEQUENCE [LARGE SCALE GENOMIC DNA]</scope>
    <source>
        <strain>ATCC BAA-735 / DSM 15497 / L2-TR</strain>
    </source>
</reference>
<gene>
    <name type="ordered locus">IL1088</name>
</gene>